<keyword id="KW-0067">ATP-binding</keyword>
<keyword id="KW-0436">Ligase</keyword>
<keyword id="KW-0460">Magnesium</keyword>
<keyword id="KW-0464">Manganese</keyword>
<keyword id="KW-0479">Metal-binding</keyword>
<keyword id="KW-0547">Nucleotide-binding</keyword>
<keyword id="KW-0648">Protein biosynthesis</keyword>
<gene>
    <name evidence="1" type="primary">rimK2</name>
    <name type="ordered locus">Patl_3666</name>
</gene>
<protein>
    <recommendedName>
        <fullName evidence="1">Probable alpha-L-glutamate ligase 2</fullName>
        <ecNumber evidence="1">6.3.2.-</ecNumber>
    </recommendedName>
</protein>
<comment type="cofactor">
    <cofactor evidence="1">
        <name>Mg(2+)</name>
        <dbReference type="ChEBI" id="CHEBI:18420"/>
    </cofactor>
    <cofactor evidence="1">
        <name>Mn(2+)</name>
        <dbReference type="ChEBI" id="CHEBI:29035"/>
    </cofactor>
    <text evidence="1">Binds 2 magnesium or manganese ions per subunit.</text>
</comment>
<comment type="similarity">
    <text evidence="1">Belongs to the RimK family.</text>
</comment>
<reference key="1">
    <citation type="submission" date="2006-06" db="EMBL/GenBank/DDBJ databases">
        <title>Complete sequence of Pseudoalteromonas atlantica T6c.</title>
        <authorList>
            <consortium name="US DOE Joint Genome Institute"/>
            <person name="Copeland A."/>
            <person name="Lucas S."/>
            <person name="Lapidus A."/>
            <person name="Barry K."/>
            <person name="Detter J.C."/>
            <person name="Glavina del Rio T."/>
            <person name="Hammon N."/>
            <person name="Israni S."/>
            <person name="Dalin E."/>
            <person name="Tice H."/>
            <person name="Pitluck S."/>
            <person name="Saunders E."/>
            <person name="Brettin T."/>
            <person name="Bruce D."/>
            <person name="Han C."/>
            <person name="Tapia R."/>
            <person name="Gilna P."/>
            <person name="Schmutz J."/>
            <person name="Larimer F."/>
            <person name="Land M."/>
            <person name="Hauser L."/>
            <person name="Kyrpides N."/>
            <person name="Kim E."/>
            <person name="Karls A.C."/>
            <person name="Bartlett D."/>
            <person name="Higgins B.P."/>
            <person name="Richardson P."/>
        </authorList>
    </citation>
    <scope>NUCLEOTIDE SEQUENCE [LARGE SCALE GENOMIC DNA]</scope>
    <source>
        <strain>T6c / ATCC BAA-1087</strain>
    </source>
</reference>
<proteinExistence type="inferred from homology"/>
<name>RIMK2_PSEA6</name>
<accession>Q15PM0</accession>
<feature type="chain" id="PRO_0000340545" description="Probable alpha-L-glutamate ligase 2">
    <location>
        <begin position="1"/>
        <end position="301"/>
    </location>
</feature>
<feature type="domain" description="ATP-grasp" evidence="1">
    <location>
        <begin position="104"/>
        <end position="287"/>
    </location>
</feature>
<feature type="binding site" evidence="1">
    <location>
        <position position="141"/>
    </location>
    <ligand>
        <name>ATP</name>
        <dbReference type="ChEBI" id="CHEBI:30616"/>
    </ligand>
</feature>
<feature type="binding site" evidence="1">
    <location>
        <begin position="178"/>
        <end position="179"/>
    </location>
    <ligand>
        <name>ATP</name>
        <dbReference type="ChEBI" id="CHEBI:30616"/>
    </ligand>
</feature>
<feature type="binding site" evidence="1">
    <location>
        <position position="187"/>
    </location>
    <ligand>
        <name>ATP</name>
        <dbReference type="ChEBI" id="CHEBI:30616"/>
    </ligand>
</feature>
<feature type="binding site" evidence="1">
    <location>
        <begin position="211"/>
        <end position="213"/>
    </location>
    <ligand>
        <name>ATP</name>
        <dbReference type="ChEBI" id="CHEBI:30616"/>
    </ligand>
</feature>
<feature type="binding site" evidence="1">
    <location>
        <position position="248"/>
    </location>
    <ligand>
        <name>Mg(2+)</name>
        <dbReference type="ChEBI" id="CHEBI:18420"/>
        <label>1</label>
    </ligand>
</feature>
<feature type="binding site" evidence="1">
    <location>
        <position position="248"/>
    </location>
    <ligand>
        <name>Mn(2+)</name>
        <dbReference type="ChEBI" id="CHEBI:29035"/>
        <label>1</label>
    </ligand>
</feature>
<feature type="binding site" evidence="1">
    <location>
        <position position="260"/>
    </location>
    <ligand>
        <name>Mg(2+)</name>
        <dbReference type="ChEBI" id="CHEBI:18420"/>
        <label>1</label>
    </ligand>
</feature>
<feature type="binding site" evidence="1">
    <location>
        <position position="260"/>
    </location>
    <ligand>
        <name>Mg(2+)</name>
        <dbReference type="ChEBI" id="CHEBI:18420"/>
        <label>2</label>
    </ligand>
</feature>
<feature type="binding site" evidence="1">
    <location>
        <position position="260"/>
    </location>
    <ligand>
        <name>Mn(2+)</name>
        <dbReference type="ChEBI" id="CHEBI:29035"/>
        <label>1</label>
    </ligand>
</feature>
<feature type="binding site" evidence="1">
    <location>
        <position position="260"/>
    </location>
    <ligand>
        <name>Mn(2+)</name>
        <dbReference type="ChEBI" id="CHEBI:29035"/>
        <label>2</label>
    </ligand>
</feature>
<feature type="binding site" evidence="1">
    <location>
        <position position="262"/>
    </location>
    <ligand>
        <name>Mg(2+)</name>
        <dbReference type="ChEBI" id="CHEBI:18420"/>
        <label>2</label>
    </ligand>
</feature>
<feature type="binding site" evidence="1">
    <location>
        <position position="262"/>
    </location>
    <ligand>
        <name>Mn(2+)</name>
        <dbReference type="ChEBI" id="CHEBI:29035"/>
        <label>2</label>
    </ligand>
</feature>
<sequence length="301" mass="32427">MKIAILSRNQNLYSTKRLKEAGESLGHEVDVIDTLHCYMDISSNRPAVRFKGEALPYYDAIIPRIGASVTFYGTAVVRQFEMMGTFSINESVAISRSRDKLRSMQLLSRKGIGMPRTGFARQPDRIDDLIKNVGGAPVVIKLLEGTQGIGVVLADTQKAAESIIEAFMGLNANILVQEYIKEAGGADIRCLVVGGKVVAAMKRQAAAGEFRSNLHRGGSASLVRLSPQERKTAIDAAKTMGLNMCGVDILRSNNGPVVMEVNSSPGLEGIETATGKDVASMIIEFIVKNAKPNNTKTRGKG</sequence>
<dbReference type="EC" id="6.3.2.-" evidence="1"/>
<dbReference type="EMBL" id="CP000388">
    <property type="protein sequence ID" value="ABG42168.1"/>
    <property type="molecule type" value="Genomic_DNA"/>
</dbReference>
<dbReference type="RefSeq" id="WP_011576390.1">
    <property type="nucleotide sequence ID" value="NC_008228.1"/>
</dbReference>
<dbReference type="SMR" id="Q15PM0"/>
<dbReference type="STRING" id="342610.Patl_3666"/>
<dbReference type="KEGG" id="pat:Patl_3666"/>
<dbReference type="eggNOG" id="COG0189">
    <property type="taxonomic scope" value="Bacteria"/>
</dbReference>
<dbReference type="HOGENOM" id="CLU_054353_0_1_6"/>
<dbReference type="OrthoDB" id="3865600at2"/>
<dbReference type="Proteomes" id="UP000001981">
    <property type="component" value="Chromosome"/>
</dbReference>
<dbReference type="GO" id="GO:0005737">
    <property type="term" value="C:cytoplasm"/>
    <property type="evidence" value="ECO:0007669"/>
    <property type="project" value="TreeGrafter"/>
</dbReference>
<dbReference type="GO" id="GO:0005524">
    <property type="term" value="F:ATP binding"/>
    <property type="evidence" value="ECO:0007669"/>
    <property type="project" value="UniProtKB-UniRule"/>
</dbReference>
<dbReference type="GO" id="GO:0046872">
    <property type="term" value="F:metal ion binding"/>
    <property type="evidence" value="ECO:0007669"/>
    <property type="project" value="UniProtKB-KW"/>
</dbReference>
<dbReference type="GO" id="GO:0018169">
    <property type="term" value="F:ribosomal S6-glutamic acid ligase activity"/>
    <property type="evidence" value="ECO:0007669"/>
    <property type="project" value="TreeGrafter"/>
</dbReference>
<dbReference type="GO" id="GO:0036211">
    <property type="term" value="P:protein modification process"/>
    <property type="evidence" value="ECO:0007669"/>
    <property type="project" value="InterPro"/>
</dbReference>
<dbReference type="GO" id="GO:0009432">
    <property type="term" value="P:SOS response"/>
    <property type="evidence" value="ECO:0007669"/>
    <property type="project" value="TreeGrafter"/>
</dbReference>
<dbReference type="GO" id="GO:0006412">
    <property type="term" value="P:translation"/>
    <property type="evidence" value="ECO:0007669"/>
    <property type="project" value="UniProtKB-KW"/>
</dbReference>
<dbReference type="FunFam" id="3.40.50.20:FF:000004">
    <property type="entry name" value="Probable alpha-L-glutamate ligase"/>
    <property type="match status" value="1"/>
</dbReference>
<dbReference type="FunFam" id="3.30.1490.20:FF:000005">
    <property type="entry name" value="Probable alpha-L-glutamate ligase 1"/>
    <property type="match status" value="1"/>
</dbReference>
<dbReference type="Gene3D" id="3.40.50.20">
    <property type="match status" value="1"/>
</dbReference>
<dbReference type="Gene3D" id="3.30.1490.20">
    <property type="entry name" value="ATP-grasp fold, A domain"/>
    <property type="match status" value="1"/>
</dbReference>
<dbReference type="Gene3D" id="3.30.470.20">
    <property type="entry name" value="ATP-grasp fold, B domain"/>
    <property type="match status" value="1"/>
</dbReference>
<dbReference type="HAMAP" id="MF_01552">
    <property type="entry name" value="RimK"/>
    <property type="match status" value="1"/>
</dbReference>
<dbReference type="InterPro" id="IPR011761">
    <property type="entry name" value="ATP-grasp"/>
</dbReference>
<dbReference type="InterPro" id="IPR013651">
    <property type="entry name" value="ATP-grasp_RimK-type"/>
</dbReference>
<dbReference type="InterPro" id="IPR013815">
    <property type="entry name" value="ATP_grasp_subdomain_1"/>
</dbReference>
<dbReference type="InterPro" id="IPR023533">
    <property type="entry name" value="RimK"/>
</dbReference>
<dbReference type="InterPro" id="IPR041107">
    <property type="entry name" value="Rimk_N"/>
</dbReference>
<dbReference type="InterPro" id="IPR004666">
    <property type="entry name" value="Rp_bS6_RimK/Lys_biosynth_LsyX"/>
</dbReference>
<dbReference type="NCBIfam" id="NF007764">
    <property type="entry name" value="PRK10446.1"/>
    <property type="match status" value="1"/>
</dbReference>
<dbReference type="NCBIfam" id="TIGR00768">
    <property type="entry name" value="rimK_fam"/>
    <property type="match status" value="1"/>
</dbReference>
<dbReference type="PANTHER" id="PTHR21621:SF7">
    <property type="entry name" value="RIBOSOMAL PROTEIN BS6--L-GLUTAMATE LIGASE"/>
    <property type="match status" value="1"/>
</dbReference>
<dbReference type="PANTHER" id="PTHR21621">
    <property type="entry name" value="RIBOSOMAL PROTEIN S6 MODIFICATION PROTEIN"/>
    <property type="match status" value="1"/>
</dbReference>
<dbReference type="Pfam" id="PF08443">
    <property type="entry name" value="RimK"/>
    <property type="match status" value="1"/>
</dbReference>
<dbReference type="Pfam" id="PF18030">
    <property type="entry name" value="Rimk_N"/>
    <property type="match status" value="1"/>
</dbReference>
<dbReference type="SUPFAM" id="SSF56059">
    <property type="entry name" value="Glutathione synthetase ATP-binding domain-like"/>
    <property type="match status" value="1"/>
</dbReference>
<dbReference type="PROSITE" id="PS50975">
    <property type="entry name" value="ATP_GRASP"/>
    <property type="match status" value="1"/>
</dbReference>
<evidence type="ECO:0000255" key="1">
    <source>
        <dbReference type="HAMAP-Rule" id="MF_01552"/>
    </source>
</evidence>
<organism>
    <name type="scientific">Pseudoalteromonas atlantica (strain T6c / ATCC BAA-1087)</name>
    <dbReference type="NCBI Taxonomy" id="3042615"/>
    <lineage>
        <taxon>Bacteria</taxon>
        <taxon>Pseudomonadati</taxon>
        <taxon>Pseudomonadota</taxon>
        <taxon>Gammaproteobacteria</taxon>
        <taxon>Alteromonadales</taxon>
        <taxon>Alteromonadaceae</taxon>
        <taxon>Paraglaciecola</taxon>
    </lineage>
</organism>